<proteinExistence type="inferred from homology"/>
<sequence length="569" mass="66413">MDSILTIVIIVVSSILVLLMIELMIRNRSYKDIEALEQWQQEIKDKPVADELKRVKDLNMTGQTEELFGKWREDWDEIVATILPKAEKDLEGARKYASQFSFRKAKYAMNEAISNLDEADNRITDILNELQQLLESHEKNSAEIDGLRDVYRNMKKSVLAHRHMYGAAEQKIEELLDVESDKFQKFEEATANGDYLKARDIVMSLEEGLSNLEGMIQEVPDLLVECQATLPVQLEDLLQGHDEMKKQGYVLNHLEIPKEVRDMTKQLQTCLIDIQELHITEAAEKIEALKTRLDTLYDQLEKEVHAKYYVEQKTIRVYDDLEEIHEQALETKAETQFVKQSYQLQDKDIESQKIIEKQMHILMKRFEVLQLRVAEQDIAFSVIREELEEIYEQCETLKVLHAEYKEMLQAMRKEEFEAREKLQEMRNMILETKRLMQKSNLPGLPESIMEELQKGQEAMQAVYGHLELKPLNMHVVNSELEEAYAIVNDVSERTQDVIGQAYLVEKLIQYGNRYRSQDMDLAYSLDNAERLFREYEYDAALEQAASVLEQLEPGVVQKIAEFVDNEQTS</sequence>
<reference key="1">
    <citation type="journal article" date="2008" name="Chem. Biol. Interact.">
        <title>Extending the Bacillus cereus group genomics to putative food-borne pathogens of different toxicity.</title>
        <authorList>
            <person name="Lapidus A."/>
            <person name="Goltsman E."/>
            <person name="Auger S."/>
            <person name="Galleron N."/>
            <person name="Segurens B."/>
            <person name="Dossat C."/>
            <person name="Land M.L."/>
            <person name="Broussolle V."/>
            <person name="Brillard J."/>
            <person name="Guinebretiere M.-H."/>
            <person name="Sanchis V."/>
            <person name="Nguen-the C."/>
            <person name="Lereclus D."/>
            <person name="Richardson P."/>
            <person name="Wincker P."/>
            <person name="Weissenbach J."/>
            <person name="Ehrlich S.D."/>
            <person name="Sorokin A."/>
        </authorList>
    </citation>
    <scope>NUCLEOTIDE SEQUENCE [LARGE SCALE GENOMIC DNA]</scope>
    <source>
        <strain>DSM 22905 / CIP 110041 / 391-98 / NVH 391-98</strain>
    </source>
</reference>
<feature type="chain" id="PRO_1000083318" description="Septation ring formation regulator EzrA">
    <location>
        <begin position="1"/>
        <end position="569"/>
    </location>
</feature>
<feature type="topological domain" description="Extracellular" evidence="1">
    <location>
        <begin position="1"/>
        <end position="6"/>
    </location>
</feature>
<feature type="transmembrane region" description="Helical" evidence="1">
    <location>
        <begin position="7"/>
        <end position="25"/>
    </location>
</feature>
<feature type="topological domain" description="Cytoplasmic" evidence="1">
    <location>
        <begin position="26"/>
        <end position="569"/>
    </location>
</feature>
<feature type="coiled-coil region" evidence="1">
    <location>
        <begin position="103"/>
        <end position="149"/>
    </location>
</feature>
<feature type="coiled-coil region" evidence="1">
    <location>
        <begin position="273"/>
        <end position="336"/>
    </location>
</feature>
<feature type="coiled-coil region" evidence="1">
    <location>
        <begin position="383"/>
        <end position="440"/>
    </location>
</feature>
<comment type="function">
    <text evidence="1">Negative regulator of FtsZ ring formation; modulates the frequency and position of FtsZ ring formation. Inhibits FtsZ ring formation at polar sites. Interacts either with FtsZ or with one of its binding partners to promote depolymerization.</text>
</comment>
<comment type="subcellular location">
    <subcellularLocation>
        <location evidence="1">Cell membrane</location>
        <topology evidence="1">Single-pass membrane protein</topology>
    </subcellularLocation>
    <text evidence="1">Colocalized with FtsZ to the nascent septal site.</text>
</comment>
<comment type="similarity">
    <text evidence="1">Belongs to the EzrA family.</text>
</comment>
<protein>
    <recommendedName>
        <fullName evidence="1">Septation ring formation regulator EzrA</fullName>
    </recommendedName>
</protein>
<keyword id="KW-0131">Cell cycle</keyword>
<keyword id="KW-0132">Cell division</keyword>
<keyword id="KW-1003">Cell membrane</keyword>
<keyword id="KW-0175">Coiled coil</keyword>
<keyword id="KW-0472">Membrane</keyword>
<keyword id="KW-0717">Septation</keyword>
<keyword id="KW-0812">Transmembrane</keyword>
<keyword id="KW-1133">Transmembrane helix</keyword>
<gene>
    <name evidence="1" type="primary">ezrA</name>
    <name type="ordered locus">Bcer98_3321</name>
</gene>
<organism>
    <name type="scientific">Bacillus cytotoxicus (strain DSM 22905 / CIP 110041 / 391-98 / NVH 391-98)</name>
    <dbReference type="NCBI Taxonomy" id="315749"/>
    <lineage>
        <taxon>Bacteria</taxon>
        <taxon>Bacillati</taxon>
        <taxon>Bacillota</taxon>
        <taxon>Bacilli</taxon>
        <taxon>Bacillales</taxon>
        <taxon>Bacillaceae</taxon>
        <taxon>Bacillus</taxon>
        <taxon>Bacillus cereus group</taxon>
    </lineage>
</organism>
<evidence type="ECO:0000255" key="1">
    <source>
        <dbReference type="HAMAP-Rule" id="MF_00728"/>
    </source>
</evidence>
<dbReference type="EMBL" id="CP000764">
    <property type="protein sequence ID" value="ABS23538.1"/>
    <property type="molecule type" value="Genomic_DNA"/>
</dbReference>
<dbReference type="RefSeq" id="WP_012095779.1">
    <property type="nucleotide sequence ID" value="NC_009674.1"/>
</dbReference>
<dbReference type="SMR" id="A7GTT0"/>
<dbReference type="STRING" id="315749.Bcer98_3321"/>
<dbReference type="GeneID" id="33898566"/>
<dbReference type="KEGG" id="bcy:Bcer98_3321"/>
<dbReference type="eggNOG" id="COG4477">
    <property type="taxonomic scope" value="Bacteria"/>
</dbReference>
<dbReference type="HOGENOM" id="CLU_034079_1_0_9"/>
<dbReference type="OrthoDB" id="1654473at2"/>
<dbReference type="Proteomes" id="UP000002300">
    <property type="component" value="Chromosome"/>
</dbReference>
<dbReference type="GO" id="GO:0005886">
    <property type="term" value="C:plasma membrane"/>
    <property type="evidence" value="ECO:0007669"/>
    <property type="project" value="UniProtKB-SubCell"/>
</dbReference>
<dbReference type="GO" id="GO:0005940">
    <property type="term" value="C:septin ring"/>
    <property type="evidence" value="ECO:0007669"/>
    <property type="project" value="InterPro"/>
</dbReference>
<dbReference type="GO" id="GO:0000917">
    <property type="term" value="P:division septum assembly"/>
    <property type="evidence" value="ECO:0007669"/>
    <property type="project" value="UniProtKB-KW"/>
</dbReference>
<dbReference type="GO" id="GO:0000921">
    <property type="term" value="P:septin ring assembly"/>
    <property type="evidence" value="ECO:0007669"/>
    <property type="project" value="InterPro"/>
</dbReference>
<dbReference type="HAMAP" id="MF_00728">
    <property type="entry name" value="EzrA"/>
    <property type="match status" value="1"/>
</dbReference>
<dbReference type="InterPro" id="IPR010379">
    <property type="entry name" value="EzrA"/>
</dbReference>
<dbReference type="NCBIfam" id="NF003411">
    <property type="entry name" value="PRK04778.1-5"/>
    <property type="match status" value="1"/>
</dbReference>
<dbReference type="NCBIfam" id="NF003413">
    <property type="entry name" value="PRK04778.1-7"/>
    <property type="match status" value="1"/>
</dbReference>
<dbReference type="Pfam" id="PF06160">
    <property type="entry name" value="EzrA"/>
    <property type="match status" value="1"/>
</dbReference>
<accession>A7GTT0</accession>
<name>EZRA_BACCN</name>